<reference key="1">
    <citation type="journal article" date="2009" name="Environ. Microbiol.">
        <title>The genome of Polaromonas naphthalenivorans strain CJ2, isolated from coal tar-contaminated sediment, reveals physiological and metabolic versatility and evolution through extensive horizontal gene transfer.</title>
        <authorList>
            <person name="Yagi J.M."/>
            <person name="Sims D."/>
            <person name="Brettin T."/>
            <person name="Bruce D."/>
            <person name="Madsen E.L."/>
        </authorList>
    </citation>
    <scope>NUCLEOTIDE SEQUENCE [LARGE SCALE GENOMIC DNA]</scope>
    <source>
        <strain>CJ2</strain>
    </source>
</reference>
<name>FETP_POLNA</name>
<feature type="chain" id="PRO_1000045049" description="Probable Fe(2+)-trafficking protein">
    <location>
        <begin position="1"/>
        <end position="93"/>
    </location>
</feature>
<sequence length="93" mass="10488">MARLVNCIKLGREAEGLDFPPYPGALGKRIWEEVSKQAWADWMKQQTMLVNENRLNLADARARQYLARQMEKHFFGDGADAVQGYVPPTPPGA</sequence>
<protein>
    <recommendedName>
        <fullName evidence="1">Probable Fe(2+)-trafficking protein</fullName>
    </recommendedName>
</protein>
<gene>
    <name type="ordered locus">Pnap_2423</name>
</gene>
<dbReference type="EMBL" id="CP000529">
    <property type="protein sequence ID" value="ABM37730.1"/>
    <property type="molecule type" value="Genomic_DNA"/>
</dbReference>
<dbReference type="RefSeq" id="WP_011801808.1">
    <property type="nucleotide sequence ID" value="NC_008781.1"/>
</dbReference>
<dbReference type="SMR" id="A1VQ02"/>
<dbReference type="STRING" id="365044.Pnap_2423"/>
<dbReference type="KEGG" id="pna:Pnap_2423"/>
<dbReference type="eggNOG" id="COG2924">
    <property type="taxonomic scope" value="Bacteria"/>
</dbReference>
<dbReference type="HOGENOM" id="CLU_170994_0_0_4"/>
<dbReference type="OrthoDB" id="9804318at2"/>
<dbReference type="Proteomes" id="UP000000644">
    <property type="component" value="Chromosome"/>
</dbReference>
<dbReference type="GO" id="GO:0005829">
    <property type="term" value="C:cytosol"/>
    <property type="evidence" value="ECO:0007669"/>
    <property type="project" value="TreeGrafter"/>
</dbReference>
<dbReference type="GO" id="GO:0005506">
    <property type="term" value="F:iron ion binding"/>
    <property type="evidence" value="ECO:0007669"/>
    <property type="project" value="UniProtKB-UniRule"/>
</dbReference>
<dbReference type="GO" id="GO:0034599">
    <property type="term" value="P:cellular response to oxidative stress"/>
    <property type="evidence" value="ECO:0007669"/>
    <property type="project" value="TreeGrafter"/>
</dbReference>
<dbReference type="FunFam" id="1.10.3880.10:FF:000001">
    <property type="entry name" value="Probable Fe(2+)-trafficking protein"/>
    <property type="match status" value="1"/>
</dbReference>
<dbReference type="Gene3D" id="1.10.3880.10">
    <property type="entry name" value="Fe(II) trafficking protein YggX"/>
    <property type="match status" value="1"/>
</dbReference>
<dbReference type="HAMAP" id="MF_00686">
    <property type="entry name" value="Fe_traffic_YggX"/>
    <property type="match status" value="1"/>
</dbReference>
<dbReference type="InterPro" id="IPR007457">
    <property type="entry name" value="Fe_traffick_prot_YggX"/>
</dbReference>
<dbReference type="InterPro" id="IPR036766">
    <property type="entry name" value="Fe_traffick_prot_YggX_sf"/>
</dbReference>
<dbReference type="NCBIfam" id="NF003817">
    <property type="entry name" value="PRK05408.1"/>
    <property type="match status" value="1"/>
</dbReference>
<dbReference type="PANTHER" id="PTHR36965">
    <property type="entry name" value="FE(2+)-TRAFFICKING PROTEIN-RELATED"/>
    <property type="match status" value="1"/>
</dbReference>
<dbReference type="PANTHER" id="PTHR36965:SF1">
    <property type="entry name" value="FE(2+)-TRAFFICKING PROTEIN-RELATED"/>
    <property type="match status" value="1"/>
</dbReference>
<dbReference type="Pfam" id="PF04362">
    <property type="entry name" value="Iron_traffic"/>
    <property type="match status" value="1"/>
</dbReference>
<dbReference type="PIRSF" id="PIRSF029827">
    <property type="entry name" value="Fe_traffic_YggX"/>
    <property type="match status" value="1"/>
</dbReference>
<dbReference type="SUPFAM" id="SSF111148">
    <property type="entry name" value="YggX-like"/>
    <property type="match status" value="1"/>
</dbReference>
<proteinExistence type="inferred from homology"/>
<evidence type="ECO:0000255" key="1">
    <source>
        <dbReference type="HAMAP-Rule" id="MF_00686"/>
    </source>
</evidence>
<organism>
    <name type="scientific">Polaromonas naphthalenivorans (strain CJ2)</name>
    <dbReference type="NCBI Taxonomy" id="365044"/>
    <lineage>
        <taxon>Bacteria</taxon>
        <taxon>Pseudomonadati</taxon>
        <taxon>Pseudomonadota</taxon>
        <taxon>Betaproteobacteria</taxon>
        <taxon>Burkholderiales</taxon>
        <taxon>Comamonadaceae</taxon>
        <taxon>Polaromonas</taxon>
    </lineage>
</organism>
<accession>A1VQ02</accession>
<comment type="function">
    <text evidence="1">Could be a mediator in iron transactions between iron acquisition and iron-requiring processes, such as synthesis and/or repair of Fe-S clusters in biosynthetic enzymes.</text>
</comment>
<comment type="similarity">
    <text evidence="1">Belongs to the Fe(2+)-trafficking protein family.</text>
</comment>
<keyword id="KW-0408">Iron</keyword>
<keyword id="KW-1185">Reference proteome</keyword>